<reference key="1">
    <citation type="submission" date="2007-02" db="EMBL/GenBank/DDBJ databases">
        <title>Complete sequence of chromosome of Yersinia pestis Pestoides F.</title>
        <authorList>
            <consortium name="US DOE Joint Genome Institute"/>
            <person name="Copeland A."/>
            <person name="Lucas S."/>
            <person name="Lapidus A."/>
            <person name="Barry K."/>
            <person name="Detter J.C."/>
            <person name="Glavina del Rio T."/>
            <person name="Hammon N."/>
            <person name="Israni S."/>
            <person name="Dalin E."/>
            <person name="Tice H."/>
            <person name="Pitluck S."/>
            <person name="Di Bartolo G."/>
            <person name="Chain P."/>
            <person name="Malfatti S."/>
            <person name="Shin M."/>
            <person name="Vergez L."/>
            <person name="Schmutz J."/>
            <person name="Larimer F."/>
            <person name="Land M."/>
            <person name="Hauser L."/>
            <person name="Worsham P."/>
            <person name="Chu M."/>
            <person name="Bearden S."/>
            <person name="Garcia E."/>
            <person name="Richardson P."/>
        </authorList>
    </citation>
    <scope>NUCLEOTIDE SEQUENCE [LARGE SCALE GENOMIC DNA]</scope>
    <source>
        <strain>Pestoides F</strain>
    </source>
</reference>
<feature type="chain" id="PRO_1000000555" description="Argininosuccinate lyase">
    <location>
        <begin position="1"/>
        <end position="457"/>
    </location>
</feature>
<organism>
    <name type="scientific">Yersinia pestis (strain Pestoides F)</name>
    <dbReference type="NCBI Taxonomy" id="386656"/>
    <lineage>
        <taxon>Bacteria</taxon>
        <taxon>Pseudomonadati</taxon>
        <taxon>Pseudomonadota</taxon>
        <taxon>Gammaproteobacteria</taxon>
        <taxon>Enterobacterales</taxon>
        <taxon>Yersiniaceae</taxon>
        <taxon>Yersinia</taxon>
    </lineage>
</organism>
<gene>
    <name evidence="1" type="primary">argH</name>
    <name type="ordered locus">YPDSF_3535</name>
</gene>
<evidence type="ECO:0000255" key="1">
    <source>
        <dbReference type="HAMAP-Rule" id="MF_00006"/>
    </source>
</evidence>
<protein>
    <recommendedName>
        <fullName evidence="1">Argininosuccinate lyase</fullName>
        <shortName evidence="1">ASAL</shortName>
        <ecNumber evidence="1">4.3.2.1</ecNumber>
    </recommendedName>
    <alternativeName>
        <fullName evidence="1">Arginosuccinase</fullName>
    </alternativeName>
</protein>
<accession>A4TRH3</accession>
<comment type="catalytic activity">
    <reaction evidence="1">
        <text>2-(N(omega)-L-arginino)succinate = fumarate + L-arginine</text>
        <dbReference type="Rhea" id="RHEA:24020"/>
        <dbReference type="ChEBI" id="CHEBI:29806"/>
        <dbReference type="ChEBI" id="CHEBI:32682"/>
        <dbReference type="ChEBI" id="CHEBI:57472"/>
        <dbReference type="EC" id="4.3.2.1"/>
    </reaction>
</comment>
<comment type="pathway">
    <text evidence="1">Amino-acid biosynthesis; L-arginine biosynthesis; L-arginine from L-ornithine and carbamoyl phosphate: step 3/3.</text>
</comment>
<comment type="subcellular location">
    <subcellularLocation>
        <location evidence="1">Cytoplasm</location>
    </subcellularLocation>
</comment>
<comment type="similarity">
    <text evidence="1">Belongs to the lyase 1 family. Argininosuccinate lyase subfamily.</text>
</comment>
<proteinExistence type="inferred from homology"/>
<dbReference type="EC" id="4.3.2.1" evidence="1"/>
<dbReference type="EMBL" id="CP000668">
    <property type="protein sequence ID" value="ABP41885.1"/>
    <property type="molecule type" value="Genomic_DNA"/>
</dbReference>
<dbReference type="RefSeq" id="WP_002209487.1">
    <property type="nucleotide sequence ID" value="NZ_CP009715.1"/>
</dbReference>
<dbReference type="SMR" id="A4TRH3"/>
<dbReference type="GeneID" id="57974777"/>
<dbReference type="KEGG" id="ypp:YPDSF_3535"/>
<dbReference type="PATRIC" id="fig|386656.14.peg.191"/>
<dbReference type="UniPathway" id="UPA00068">
    <property type="reaction ID" value="UER00114"/>
</dbReference>
<dbReference type="GO" id="GO:0005829">
    <property type="term" value="C:cytosol"/>
    <property type="evidence" value="ECO:0007669"/>
    <property type="project" value="TreeGrafter"/>
</dbReference>
<dbReference type="GO" id="GO:0004056">
    <property type="term" value="F:argininosuccinate lyase activity"/>
    <property type="evidence" value="ECO:0007669"/>
    <property type="project" value="UniProtKB-UniRule"/>
</dbReference>
<dbReference type="GO" id="GO:0042450">
    <property type="term" value="P:arginine biosynthetic process via ornithine"/>
    <property type="evidence" value="ECO:0007669"/>
    <property type="project" value="InterPro"/>
</dbReference>
<dbReference type="GO" id="GO:0006526">
    <property type="term" value="P:L-arginine biosynthetic process"/>
    <property type="evidence" value="ECO:0007669"/>
    <property type="project" value="UniProtKB-UniRule"/>
</dbReference>
<dbReference type="CDD" id="cd01359">
    <property type="entry name" value="Argininosuccinate_lyase"/>
    <property type="match status" value="1"/>
</dbReference>
<dbReference type="FunFam" id="1.10.275.10:FF:000004">
    <property type="entry name" value="Argininosuccinate lyase"/>
    <property type="match status" value="1"/>
</dbReference>
<dbReference type="FunFam" id="1.10.40.30:FF:000001">
    <property type="entry name" value="Argininosuccinate lyase"/>
    <property type="match status" value="1"/>
</dbReference>
<dbReference type="FunFam" id="1.20.200.10:FF:000006">
    <property type="entry name" value="Argininosuccinate lyase"/>
    <property type="match status" value="1"/>
</dbReference>
<dbReference type="Gene3D" id="1.10.40.30">
    <property type="entry name" value="Fumarase/aspartase (C-terminal domain)"/>
    <property type="match status" value="1"/>
</dbReference>
<dbReference type="Gene3D" id="1.20.200.10">
    <property type="entry name" value="Fumarase/aspartase (Central domain)"/>
    <property type="match status" value="1"/>
</dbReference>
<dbReference type="Gene3D" id="1.10.275.10">
    <property type="entry name" value="Fumarase/aspartase (N-terminal domain)"/>
    <property type="match status" value="1"/>
</dbReference>
<dbReference type="HAMAP" id="MF_00006">
    <property type="entry name" value="Arg_succ_lyase"/>
    <property type="match status" value="1"/>
</dbReference>
<dbReference type="InterPro" id="IPR029419">
    <property type="entry name" value="Arg_succ_lyase_C"/>
</dbReference>
<dbReference type="InterPro" id="IPR009049">
    <property type="entry name" value="Argininosuccinate_lyase"/>
</dbReference>
<dbReference type="InterPro" id="IPR024083">
    <property type="entry name" value="Fumarase/histidase_N"/>
</dbReference>
<dbReference type="InterPro" id="IPR020557">
    <property type="entry name" value="Fumarate_lyase_CS"/>
</dbReference>
<dbReference type="InterPro" id="IPR000362">
    <property type="entry name" value="Fumarate_lyase_fam"/>
</dbReference>
<dbReference type="InterPro" id="IPR022761">
    <property type="entry name" value="Fumarate_lyase_N"/>
</dbReference>
<dbReference type="InterPro" id="IPR008948">
    <property type="entry name" value="L-Aspartase-like"/>
</dbReference>
<dbReference type="NCBIfam" id="TIGR00838">
    <property type="entry name" value="argH"/>
    <property type="match status" value="1"/>
</dbReference>
<dbReference type="NCBIfam" id="NF008964">
    <property type="entry name" value="PRK12308.1"/>
    <property type="match status" value="1"/>
</dbReference>
<dbReference type="PANTHER" id="PTHR43814">
    <property type="entry name" value="ARGININOSUCCINATE LYASE"/>
    <property type="match status" value="1"/>
</dbReference>
<dbReference type="PANTHER" id="PTHR43814:SF1">
    <property type="entry name" value="ARGININOSUCCINATE LYASE"/>
    <property type="match status" value="1"/>
</dbReference>
<dbReference type="Pfam" id="PF14698">
    <property type="entry name" value="ASL_C2"/>
    <property type="match status" value="1"/>
</dbReference>
<dbReference type="Pfam" id="PF00206">
    <property type="entry name" value="Lyase_1"/>
    <property type="match status" value="1"/>
</dbReference>
<dbReference type="PRINTS" id="PR00145">
    <property type="entry name" value="ARGSUCLYASE"/>
</dbReference>
<dbReference type="PRINTS" id="PR00149">
    <property type="entry name" value="FUMRATELYASE"/>
</dbReference>
<dbReference type="SUPFAM" id="SSF48557">
    <property type="entry name" value="L-aspartase-like"/>
    <property type="match status" value="1"/>
</dbReference>
<dbReference type="PROSITE" id="PS00163">
    <property type="entry name" value="FUMARATE_LYASES"/>
    <property type="match status" value="1"/>
</dbReference>
<sequence length="457" mass="50100">MALWGGRFSQAADQRFKQFNDSLRFDYRLAEQDIIGSVAWSKALVTVGVLNADEQQQLEQALSVLLEEVQANPHAILASDAEDIHSWVETKLIDKVGDLGKKLHTGRSRNDQVATDLKLWCKFQITELQTAVQQLQQALVMTAEANQDAVMPGYTHLQRAQPVTFAHWCLAYVEMLSRDESRLQDTLKRLDVSPLGCGALAGTAYAIDREQLAGWLGFASATRNSLDSVSDRDHVLELLSDASIGMVHLSRFAEDLIFFNSGEAAFVDLSDRVTSGSSLMPQKKNPDALELIRGKCGRVQGALTGMTMTLKGLPLAYNKDMQEDKEGLFDALDTWLDCLHMAALVLDGIQVKRPRCKEAAEQGYANATELADYLVAKGVPFREAHHIVGEAVVEAIRQGKALEALALSDLQQFSSVIGDDVYPILALQSCLDKRVAKGGVSPQQVASAIAEAKARLF</sequence>
<name>ARLY_YERPP</name>
<keyword id="KW-0028">Amino-acid biosynthesis</keyword>
<keyword id="KW-0055">Arginine biosynthesis</keyword>
<keyword id="KW-0963">Cytoplasm</keyword>
<keyword id="KW-0456">Lyase</keyword>